<name>FOXL2_BRALU</name>
<protein>
    <recommendedName>
        <fullName>Forkhead box protein L2</fullName>
    </recommendedName>
</protein>
<feature type="chain" id="PRO_0000254947" description="Forkhead box protein L2">
    <location>
        <begin position="1"/>
        <end position="373"/>
    </location>
</feature>
<feature type="DNA-binding region" description="Fork-head" evidence="3">
    <location>
        <begin position="50"/>
        <end position="144"/>
    </location>
</feature>
<feature type="region of interest" description="Disordered" evidence="4">
    <location>
        <begin position="1"/>
        <end position="49"/>
    </location>
</feature>
<feature type="region of interest" description="Disordered" evidence="4">
    <location>
        <begin position="272"/>
        <end position="339"/>
    </location>
</feature>
<feature type="compositionally biased region" description="Pro residues" evidence="4">
    <location>
        <begin position="277"/>
        <end position="286"/>
    </location>
</feature>
<feature type="compositionally biased region" description="Basic residues" evidence="4">
    <location>
        <begin position="287"/>
        <end position="297"/>
    </location>
</feature>
<feature type="compositionally biased region" description="Pro residues" evidence="4">
    <location>
        <begin position="301"/>
        <end position="318"/>
    </location>
</feature>
<feature type="modified residue" description="Phosphoserine" evidence="2">
    <location>
        <position position="33"/>
    </location>
</feature>
<feature type="cross-link" description="Glycyl lysine isopeptide (Lys-Gly) (interchain with G-Cter in SUMO)" evidence="1">
    <location>
        <position position="25"/>
    </location>
</feature>
<gene>
    <name type="primary">FOXL2</name>
</gene>
<organism>
    <name type="scientific">Bramus lutescens</name>
    <name type="common">Transcaucasian mole vole</name>
    <name type="synonym">Ellobius lutescens</name>
    <dbReference type="NCBI Taxonomy" id="3370998"/>
    <lineage>
        <taxon>Eukaryota</taxon>
        <taxon>Metazoa</taxon>
        <taxon>Chordata</taxon>
        <taxon>Craniata</taxon>
        <taxon>Vertebrata</taxon>
        <taxon>Euteleostomi</taxon>
        <taxon>Mammalia</taxon>
        <taxon>Eutheria</taxon>
        <taxon>Euarchontoglires</taxon>
        <taxon>Glires</taxon>
        <taxon>Rodentia</taxon>
        <taxon>Myomorpha</taxon>
        <taxon>Muroidea</taxon>
        <taxon>Cricetidae</taxon>
        <taxon>Bramus</taxon>
    </lineage>
</organism>
<proteinExistence type="inferred from homology"/>
<dbReference type="EMBL" id="AY623815">
    <property type="protein sequence ID" value="AAV30684.1"/>
    <property type="molecule type" value="Genomic_DNA"/>
</dbReference>
<dbReference type="SMR" id="Q4VUF1"/>
<dbReference type="GO" id="GO:0005634">
    <property type="term" value="C:nucleus"/>
    <property type="evidence" value="ECO:0000250"/>
    <property type="project" value="UniProtKB"/>
</dbReference>
<dbReference type="GO" id="GO:0043028">
    <property type="term" value="F:cysteine-type endopeptidase regulator activity involved in apoptotic process"/>
    <property type="evidence" value="ECO:0000250"/>
    <property type="project" value="UniProtKB"/>
</dbReference>
<dbReference type="GO" id="GO:0003677">
    <property type="term" value="F:DNA binding"/>
    <property type="evidence" value="ECO:0000250"/>
    <property type="project" value="UniProtKB"/>
</dbReference>
<dbReference type="GO" id="GO:0003700">
    <property type="term" value="F:DNA-binding transcription factor activity"/>
    <property type="evidence" value="ECO:0000250"/>
    <property type="project" value="UniProtKB"/>
</dbReference>
<dbReference type="GO" id="GO:0000981">
    <property type="term" value="F:DNA-binding transcription factor activity, RNA polymerase II-specific"/>
    <property type="evidence" value="ECO:0007669"/>
    <property type="project" value="TreeGrafter"/>
</dbReference>
<dbReference type="GO" id="GO:0000978">
    <property type="term" value="F:RNA polymerase II cis-regulatory region sequence-specific DNA binding"/>
    <property type="evidence" value="ECO:0007669"/>
    <property type="project" value="TreeGrafter"/>
</dbReference>
<dbReference type="GO" id="GO:0009653">
    <property type="term" value="P:anatomical structure morphogenesis"/>
    <property type="evidence" value="ECO:0007669"/>
    <property type="project" value="TreeGrafter"/>
</dbReference>
<dbReference type="GO" id="GO:0006309">
    <property type="term" value="P:apoptotic DNA fragmentation"/>
    <property type="evidence" value="ECO:0000250"/>
    <property type="project" value="UniProtKB"/>
</dbReference>
<dbReference type="GO" id="GO:0030154">
    <property type="term" value="P:cell differentiation"/>
    <property type="evidence" value="ECO:0007669"/>
    <property type="project" value="UniProtKB-KW"/>
</dbReference>
<dbReference type="GO" id="GO:0002074">
    <property type="term" value="P:extraocular skeletal muscle development"/>
    <property type="evidence" value="ECO:0000250"/>
    <property type="project" value="UniProtKB"/>
</dbReference>
<dbReference type="GO" id="GO:0001541">
    <property type="term" value="P:ovarian follicle development"/>
    <property type="evidence" value="ECO:0000250"/>
    <property type="project" value="UniProtKB"/>
</dbReference>
<dbReference type="GO" id="GO:0043065">
    <property type="term" value="P:positive regulation of apoptotic process"/>
    <property type="evidence" value="ECO:0000250"/>
    <property type="project" value="UniProtKB"/>
</dbReference>
<dbReference type="GO" id="GO:0045893">
    <property type="term" value="P:positive regulation of DNA-templated transcription"/>
    <property type="evidence" value="ECO:0000250"/>
    <property type="project" value="UniProtKB"/>
</dbReference>
<dbReference type="CDD" id="cd20028">
    <property type="entry name" value="FH_FOXL2"/>
    <property type="match status" value="1"/>
</dbReference>
<dbReference type="FunFam" id="1.10.10.10:FF:000016">
    <property type="entry name" value="Forkhead box protein I1"/>
    <property type="match status" value="1"/>
</dbReference>
<dbReference type="Gene3D" id="1.10.10.10">
    <property type="entry name" value="Winged helix-like DNA-binding domain superfamily/Winged helix DNA-binding domain"/>
    <property type="match status" value="1"/>
</dbReference>
<dbReference type="InterPro" id="IPR047515">
    <property type="entry name" value="FH_FOXL2"/>
</dbReference>
<dbReference type="InterPro" id="IPR001766">
    <property type="entry name" value="Fork_head_dom"/>
</dbReference>
<dbReference type="InterPro" id="IPR050211">
    <property type="entry name" value="FOX_domain-containing"/>
</dbReference>
<dbReference type="InterPro" id="IPR018122">
    <property type="entry name" value="TF_fork_head_CS_1"/>
</dbReference>
<dbReference type="InterPro" id="IPR030456">
    <property type="entry name" value="TF_fork_head_CS_2"/>
</dbReference>
<dbReference type="InterPro" id="IPR036388">
    <property type="entry name" value="WH-like_DNA-bd_sf"/>
</dbReference>
<dbReference type="InterPro" id="IPR036390">
    <property type="entry name" value="WH_DNA-bd_sf"/>
</dbReference>
<dbReference type="PANTHER" id="PTHR11829">
    <property type="entry name" value="FORKHEAD BOX PROTEIN"/>
    <property type="match status" value="1"/>
</dbReference>
<dbReference type="PANTHER" id="PTHR11829:SF411">
    <property type="entry name" value="FORKHEAD BOX PROTEIN L2"/>
    <property type="match status" value="1"/>
</dbReference>
<dbReference type="Pfam" id="PF00250">
    <property type="entry name" value="Forkhead"/>
    <property type="match status" value="1"/>
</dbReference>
<dbReference type="PRINTS" id="PR00053">
    <property type="entry name" value="FORKHEAD"/>
</dbReference>
<dbReference type="SMART" id="SM00339">
    <property type="entry name" value="FH"/>
    <property type="match status" value="1"/>
</dbReference>
<dbReference type="SUPFAM" id="SSF46785">
    <property type="entry name" value="Winged helix' DNA-binding domain"/>
    <property type="match status" value="1"/>
</dbReference>
<dbReference type="PROSITE" id="PS00657">
    <property type="entry name" value="FORK_HEAD_1"/>
    <property type="match status" value="1"/>
</dbReference>
<dbReference type="PROSITE" id="PS00658">
    <property type="entry name" value="FORK_HEAD_2"/>
    <property type="match status" value="1"/>
</dbReference>
<dbReference type="PROSITE" id="PS50039">
    <property type="entry name" value="FORK_HEAD_3"/>
    <property type="match status" value="1"/>
</dbReference>
<evidence type="ECO:0000250" key="1"/>
<evidence type="ECO:0000250" key="2">
    <source>
        <dbReference type="UniProtKB" id="P58012"/>
    </source>
</evidence>
<evidence type="ECO:0000255" key="3">
    <source>
        <dbReference type="PROSITE-ProRule" id="PRU00089"/>
    </source>
</evidence>
<evidence type="ECO:0000256" key="4">
    <source>
        <dbReference type="SAM" id="MobiDB-lite"/>
    </source>
</evidence>
<comment type="function">
    <text evidence="1">Transcriptional regulator. Critical factor essential for ovary differentiation and maintenance, and repression of the genetic program for somatic testis determination (By similarity). Prevents trans-differentiation of ovary to testis through transcriptional repression of the Sertoli cell-promoting gene SOX9 (By similarity). Has apoptotic activity in ovarian cells (By similarity). Suppresses ESR1-mediated transcription of PTGS2/COX2 stimulated by tamoxifen (By similarity). Activates SIRT1 transcription under cellular stress conditions (By similarity). Activates transcription of OSR2 (By similarity). Is a regulator of CYP19 expression (By similarity). Is a transcriptional repressor of STAR (By similarity). Participates in SMAD3-dependent transcription of FST via the intronic SMAD-binding element (By similarity).</text>
</comment>
<comment type="subunit">
    <text evidence="1">Interacts with ESR1. Interacts with UBE2I/UBC9. Interacts with SMAD3. Interacts with DDX20.</text>
</comment>
<comment type="subcellular location">
    <subcellularLocation>
        <location evidence="3">Nucleus</location>
    </subcellularLocation>
</comment>
<comment type="PTM">
    <text evidence="1">Sumoylated with SUMO1; sumoylation is required for transcriptional repression activity.</text>
</comment>
<keyword id="KW-0221">Differentiation</keyword>
<keyword id="KW-0238">DNA-binding</keyword>
<keyword id="KW-1017">Isopeptide bond</keyword>
<keyword id="KW-0539">Nucleus</keyword>
<keyword id="KW-0597">Phosphoprotein</keyword>
<keyword id="KW-0804">Transcription</keyword>
<keyword id="KW-0805">Transcription regulation</keyword>
<keyword id="KW-0832">Ubl conjugation</keyword>
<sequence>MMASYPEPEDAAGALLAPENGRTVKEPEAPPPSPGKGGGTAPEKPDPAQKPPYSYVALIAMAIRESAEKRLTLSGIYQYIIAKFPFYEKNKKGWQNSIRHNLSLNECFIKVPREGGGERKGNYWTLDPACEDMFEKGNYRRRRRMKRPFRPPPAHFQPGKGLFGSGGAAGGCGVAGAGADGYGYLAPPKYLQSGFLNNSWPLPQPPSPMPYASCQMAAAAAAAAAAAAAAGPGSPGAAAVVKGLAGPAASYGPYSRVQSMALPPGVVNSYNGLGGPPAAPPPPPPHPHPHPHAHHLHAAAAPPPAPPHHGAAAPPPGQLSPSSPATAAPPAPAPTSAPGLQFACARQPELAMMHCSYWDHDSKTGALHSRLDL</sequence>
<reference key="1">
    <citation type="journal article" date="2005" name="Mamm. Genome">
        <title>Characterization of Pisrt1/Foxl2 in Ellobius lutescens and exclusion as sex-determining genes.</title>
        <authorList>
            <person name="Baumstark A."/>
            <person name="Hameister H."/>
            <person name="Hakhverdyan M."/>
            <person name="Bakloushinskaya I."/>
            <person name="Just W."/>
        </authorList>
    </citation>
    <scope>NUCLEOTIDE SEQUENCE [GENOMIC DNA]</scope>
</reference>
<accession>Q4VUF1</accession>